<proteinExistence type="evidence at protein level"/>
<sequence length="160" mass="18051">MRTAAGAVSPDSRPETRRQTRKNEEAAWGPRVCRAEREDNRKCPPSILKRSRPEHHRPEAKPQRTSRRVWFREPPAVTVHYIADKNATATVRVPGRPRPHGGSLLLQLCVCVLLVLALGLYCGRAKPVATALEDLRARLLGLVLHLRHVALTCWRGLLRL</sequence>
<name>NRAC_HUMAN</name>
<organism>
    <name type="scientific">Homo sapiens</name>
    <name type="common">Human</name>
    <dbReference type="NCBI Taxonomy" id="9606"/>
    <lineage>
        <taxon>Eukaryota</taxon>
        <taxon>Metazoa</taxon>
        <taxon>Chordata</taxon>
        <taxon>Craniata</taxon>
        <taxon>Vertebrata</taxon>
        <taxon>Euteleostomi</taxon>
        <taxon>Mammalia</taxon>
        <taxon>Eutheria</taxon>
        <taxon>Euarchontoglires</taxon>
        <taxon>Primates</taxon>
        <taxon>Haplorrhini</taxon>
        <taxon>Catarrhini</taxon>
        <taxon>Hominidae</taxon>
        <taxon>Homo</taxon>
    </lineage>
</organism>
<feature type="chain" id="PRO_0000326052" description="Nutritionally-regulated adipose and cardiac enriched protein homolog">
    <location>
        <begin position="1"/>
        <end position="160"/>
    </location>
</feature>
<feature type="transmembrane region" description="Helical" evidence="2">
    <location>
        <begin position="101"/>
        <end position="121"/>
    </location>
</feature>
<feature type="region of interest" description="Disordered" evidence="3">
    <location>
        <begin position="1"/>
        <end position="69"/>
    </location>
</feature>
<feature type="compositionally biased region" description="Basic and acidic residues" evidence="3">
    <location>
        <begin position="12"/>
        <end position="25"/>
    </location>
</feature>
<feature type="compositionally biased region" description="Basic and acidic residues" evidence="3">
    <location>
        <begin position="33"/>
        <end position="42"/>
    </location>
</feature>
<dbReference type="EMBL" id="AK095913">
    <property type="protein sequence ID" value="BAC04645.1"/>
    <property type="molecule type" value="mRNA"/>
</dbReference>
<dbReference type="EMBL" id="BX161457">
    <property type="protein sequence ID" value="CAD61919.1"/>
    <property type="molecule type" value="mRNA"/>
</dbReference>
<dbReference type="EMBL" id="CH471061">
    <property type="protein sequence ID" value="EAW81864.1"/>
    <property type="molecule type" value="Genomic_DNA"/>
</dbReference>
<dbReference type="EMBL" id="BC041103">
    <property type="protein sequence ID" value="AAH41103.1"/>
    <property type="molecule type" value="mRNA"/>
</dbReference>
<dbReference type="CCDS" id="CCDS32166.1"/>
<dbReference type="RefSeq" id="NP_001008404.1">
    <property type="nucleotide sequence ID" value="NM_001008404.2"/>
</dbReference>
<dbReference type="RefSeq" id="NP_001273328.1">
    <property type="nucleotide sequence ID" value="NM_001286399.1"/>
</dbReference>
<dbReference type="RefSeq" id="NP_001273329.1">
    <property type="nucleotide sequence ID" value="NM_001286400.1"/>
</dbReference>
<dbReference type="SMR" id="Q8N912"/>
<dbReference type="BioGRID" id="134560">
    <property type="interactions" value="47"/>
</dbReference>
<dbReference type="FunCoup" id="Q8N912">
    <property type="interactions" value="223"/>
</dbReference>
<dbReference type="IntAct" id="Q8N912">
    <property type="interactions" value="44"/>
</dbReference>
<dbReference type="STRING" id="9606.ENSP00000333041"/>
<dbReference type="BioMuta" id="C14orf180"/>
<dbReference type="jPOST" id="Q8N912"/>
<dbReference type="MassIVE" id="Q8N912"/>
<dbReference type="PeptideAtlas" id="Q8N912"/>
<dbReference type="ProteomicsDB" id="72484"/>
<dbReference type="Antibodypedia" id="28178">
    <property type="antibodies" value="64 antibodies from 13 providers"/>
</dbReference>
<dbReference type="DNASU" id="400258"/>
<dbReference type="Ensembl" id="ENST00000410013.1">
    <property type="protein sequence ID" value="ENSP00000386487.1"/>
    <property type="gene ID" value="ENSG00000184601.11"/>
</dbReference>
<dbReference type="Ensembl" id="ENST00000557649.6">
    <property type="protein sequence ID" value="ENSP00000452502.1"/>
    <property type="gene ID" value="ENSG00000184601.11"/>
</dbReference>
<dbReference type="Ensembl" id="ENST00000618752.2">
    <property type="protein sequence ID" value="ENSP00000480567.1"/>
    <property type="gene ID" value="ENSG00000274126.4"/>
</dbReference>
<dbReference type="Ensembl" id="ENST00000630349.2">
    <property type="protein sequence ID" value="ENSP00000487058.1"/>
    <property type="gene ID" value="ENSG00000274126.4"/>
</dbReference>
<dbReference type="GeneID" id="400258"/>
<dbReference type="KEGG" id="hsa:400258"/>
<dbReference type="MANE-Select" id="ENST00000557649.6">
    <property type="protein sequence ID" value="ENSP00000452502.1"/>
    <property type="RefSeq nucleotide sequence ID" value="NM_001008404.3"/>
    <property type="RefSeq protein sequence ID" value="NP_001008404.1"/>
</dbReference>
<dbReference type="UCSC" id="uc001yow.3">
    <property type="organism name" value="human"/>
</dbReference>
<dbReference type="AGR" id="HGNC:33795"/>
<dbReference type="CTD" id="400258"/>
<dbReference type="GeneCards" id="C14orf180"/>
<dbReference type="HGNC" id="HGNC:33795">
    <property type="gene designation" value="C14orf180"/>
</dbReference>
<dbReference type="HPA" id="ENSG00000184601">
    <property type="expression patterns" value="Tissue enhanced (adipose tissue, choroid plexus, heart muscle)"/>
</dbReference>
<dbReference type="MIM" id="619392">
    <property type="type" value="gene"/>
</dbReference>
<dbReference type="neXtProt" id="NX_Q8N912"/>
<dbReference type="OpenTargets" id="ENSG00000184601"/>
<dbReference type="PharmGKB" id="PA162378139"/>
<dbReference type="VEuPathDB" id="HostDB:ENSG00000184601"/>
<dbReference type="eggNOG" id="ENOG502S3R9">
    <property type="taxonomic scope" value="Eukaryota"/>
</dbReference>
<dbReference type="GeneTree" id="ENSGT00390000001214"/>
<dbReference type="HOGENOM" id="CLU_139836_0_0_1"/>
<dbReference type="InParanoid" id="Q8N912"/>
<dbReference type="OMA" id="LACWHCL"/>
<dbReference type="OrthoDB" id="9535799at2759"/>
<dbReference type="PAN-GO" id="Q8N912">
    <property type="GO annotations" value="1 GO annotation based on evolutionary models"/>
</dbReference>
<dbReference type="PhylomeDB" id="Q8N912"/>
<dbReference type="TreeFam" id="TF336371"/>
<dbReference type="PathwayCommons" id="Q8N912"/>
<dbReference type="SignaLink" id="Q8N912"/>
<dbReference type="BioGRID-ORCS" id="400258">
    <property type="hits" value="10 hits in 1127 CRISPR screens"/>
</dbReference>
<dbReference type="GenomeRNAi" id="400258"/>
<dbReference type="Pharos" id="Q8N912">
    <property type="development level" value="Tbio"/>
</dbReference>
<dbReference type="PRO" id="PR:Q8N912"/>
<dbReference type="Proteomes" id="UP000005640">
    <property type="component" value="Chromosome 14"/>
</dbReference>
<dbReference type="RNAct" id="Q8N912">
    <property type="molecule type" value="protein"/>
</dbReference>
<dbReference type="Bgee" id="ENSG00000184601">
    <property type="expression patterns" value="Expressed in apex of heart and 84 other cell types or tissues"/>
</dbReference>
<dbReference type="ExpressionAtlas" id="Q8N912">
    <property type="expression patterns" value="baseline and differential"/>
</dbReference>
<dbReference type="GO" id="GO:0005886">
    <property type="term" value="C:plasma membrane"/>
    <property type="evidence" value="ECO:0000318"/>
    <property type="project" value="GO_Central"/>
</dbReference>
<dbReference type="InterPro" id="IPR028114">
    <property type="entry name" value="DUF4658"/>
</dbReference>
<dbReference type="PANTHER" id="PTHR36868">
    <property type="entry name" value="NUTRITIONALLY-REGULATED ADIPOSE AND CARDIAC ENRICHED PROTEIN HOMOLOG"/>
    <property type="match status" value="1"/>
</dbReference>
<dbReference type="PANTHER" id="PTHR36868:SF1">
    <property type="entry name" value="NUTRITIONALLY-REGULATED ADIPOSE AND CARDIAC ENRICHED PROTEIN HOMOLOG"/>
    <property type="match status" value="1"/>
</dbReference>
<dbReference type="Pfam" id="PF15555">
    <property type="entry name" value="DUF4658"/>
    <property type="match status" value="1"/>
</dbReference>
<gene>
    <name type="primary">NRAC</name>
    <name type="synonym">C14orf180</name>
    <name type="synonym">C14orf77</name>
</gene>
<accession>Q8N912</accession>
<protein>
    <recommendedName>
        <fullName>Nutritionally-regulated adipose and cardiac enriched protein homolog</fullName>
    </recommendedName>
</protein>
<comment type="interaction">
    <interactant intactId="EBI-12051377">
        <id>Q8N912</id>
    </interactant>
    <interactant intactId="EBI-2808854">
        <id>Q92482</id>
        <label>AQP3</label>
    </interactant>
    <organismsDiffer>false</organismsDiffer>
    <experiments>3</experiments>
</comment>
<comment type="interaction">
    <interactant intactId="EBI-12051377">
        <id>Q8N912</id>
    </interactant>
    <interactant intactId="EBI-13059134">
        <id>Q13520</id>
        <label>AQP6</label>
    </interactant>
    <organismsDiffer>false</organismsDiffer>
    <experiments>3</experiments>
</comment>
<comment type="interaction">
    <interactant intactId="EBI-12051377">
        <id>Q8N912</id>
    </interactant>
    <interactant intactId="EBI-12239061">
        <id>Q8WWH4</id>
        <label>ASZ1</label>
    </interactant>
    <organismsDiffer>false</organismsDiffer>
    <experiments>3</experiments>
</comment>
<comment type="interaction">
    <interactant intactId="EBI-12051377">
        <id>Q8N912</id>
    </interactant>
    <interactant intactId="EBI-700794">
        <id>Q13323</id>
        <label>BIK</label>
    </interactant>
    <organismsDiffer>false</organismsDiffer>
    <experiments>3</experiments>
</comment>
<comment type="interaction">
    <interactant intactId="EBI-12051377">
        <id>Q8N912</id>
    </interactant>
    <interactant intactId="EBI-12222807">
        <id>P04233-2</id>
        <label>CD74</label>
    </interactant>
    <organismsDiffer>false</organismsDiffer>
    <experiments>4</experiments>
</comment>
<comment type="interaction">
    <interactant intactId="EBI-12051377">
        <id>Q8N912</id>
    </interactant>
    <interactant intactId="EBI-7797864">
        <id>P11912</id>
        <label>CD79A</label>
    </interactant>
    <organismsDiffer>false</organismsDiffer>
    <experiments>3</experiments>
</comment>
<comment type="interaction">
    <interactant intactId="EBI-12051377">
        <id>Q8N912</id>
    </interactant>
    <interactant intactId="EBI-1045797">
        <id>Q8N5K1</id>
        <label>CISD2</label>
    </interactant>
    <organismsDiffer>false</organismsDiffer>
    <experiments>3</experiments>
</comment>
<comment type="interaction">
    <interactant intactId="EBI-12051377">
        <id>Q8N912</id>
    </interactant>
    <interactant intactId="EBI-11989440">
        <id>Q9BXN2-6</id>
        <label>CLEC7A</label>
    </interactant>
    <organismsDiffer>false</organismsDiffer>
    <experiments>3</experiments>
</comment>
<comment type="interaction">
    <interactant intactId="EBI-12051377">
        <id>Q8N912</id>
    </interactant>
    <interactant intactId="EBI-18013275">
        <id>Q7Z7G2</id>
        <label>CPLX4</label>
    </interactant>
    <organismsDiffer>false</organismsDiffer>
    <experiments>3</experiments>
</comment>
<comment type="interaction">
    <interactant intactId="EBI-12051377">
        <id>Q8N912</id>
    </interactant>
    <interactant intactId="EBI-2680384">
        <id>Q9BQA9</id>
        <label>CYBC1</label>
    </interactant>
    <organismsDiffer>false</organismsDiffer>
    <experiments>3</experiments>
</comment>
<comment type="interaction">
    <interactant intactId="EBI-12051377">
        <id>Q8N912</id>
    </interactant>
    <interactant intactId="EBI-8787095">
        <id>O00559</id>
        <label>EBAG9</label>
    </interactant>
    <organismsDiffer>false</organismsDiffer>
    <experiments>3</experiments>
</comment>
<comment type="interaction">
    <interactant intactId="EBI-12051377">
        <id>Q8N912</id>
    </interactant>
    <interactant intactId="EBI-781551">
        <id>Q9Y282</id>
        <label>ERGIC3</label>
    </interactant>
    <organismsDiffer>false</organismsDiffer>
    <experiments>3</experiments>
</comment>
<comment type="interaction">
    <interactant intactId="EBI-12051377">
        <id>Q8N912</id>
    </interactant>
    <interactant intactId="EBI-18636064">
        <id>Q8TBP5</id>
        <label>FAM174A</label>
    </interactant>
    <organismsDiffer>false</organismsDiffer>
    <experiments>3</experiments>
</comment>
<comment type="interaction">
    <interactant intactId="EBI-12051377">
        <id>Q8N912</id>
    </interactant>
    <interactant intactId="EBI-18304435">
        <id>Q5JX71</id>
        <label>FAM209A</label>
    </interactant>
    <organismsDiffer>false</organismsDiffer>
    <experiments>3</experiments>
</comment>
<comment type="interaction">
    <interactant intactId="EBI-12051377">
        <id>Q8N912</id>
    </interactant>
    <interactant intactId="EBI-13345167">
        <id>Q8TDT2</id>
        <label>GPR152</label>
    </interactant>
    <organismsDiffer>false</organismsDiffer>
    <experiments>3</experiments>
</comment>
<comment type="interaction">
    <interactant intactId="EBI-12051377">
        <id>Q8N912</id>
    </interactant>
    <interactant intactId="EBI-13067820">
        <id>Q9NZD1</id>
        <label>GPRC5D</label>
    </interactant>
    <organismsDiffer>false</organismsDiffer>
    <experiments>3</experiments>
</comment>
<comment type="interaction">
    <interactant intactId="EBI-12051377">
        <id>Q8N912</id>
    </interactant>
    <interactant intactId="EBI-11721746">
        <id>Q8TED1</id>
        <label>GPX8</label>
    </interactant>
    <organismsDiffer>false</organismsDiffer>
    <experiments>3</experiments>
</comment>
<comment type="interaction">
    <interactant intactId="EBI-12051377">
        <id>Q8N912</id>
    </interactant>
    <interactant intactId="EBI-17186025">
        <id>O00219-2</id>
        <label>HAS3</label>
    </interactant>
    <organismsDiffer>false</organismsDiffer>
    <experiments>3</experiments>
</comment>
<comment type="interaction">
    <interactant intactId="EBI-12051377">
        <id>Q8N912</id>
    </interactant>
    <interactant intactId="EBI-749265">
        <id>Q8N6L0</id>
        <label>KASH5</label>
    </interactant>
    <organismsDiffer>false</organismsDiffer>
    <experiments>3</experiments>
</comment>
<comment type="interaction">
    <interactant intactId="EBI-12051377">
        <id>Q8N912</id>
    </interactant>
    <interactant intactId="EBI-12017638">
        <id>P48051</id>
        <label>KCNJ6</label>
    </interactant>
    <organismsDiffer>false</organismsDiffer>
    <experiments>3</experiments>
</comment>
<comment type="interaction">
    <interactant intactId="EBI-12051377">
        <id>Q8N912</id>
    </interactant>
    <interactant intactId="EBI-2820517">
        <id>Q8TAF8</id>
        <label>LHFPL5</label>
    </interactant>
    <organismsDiffer>false</organismsDiffer>
    <experiments>3</experiments>
</comment>
<comment type="interaction">
    <interactant intactId="EBI-12051377">
        <id>Q8N912</id>
    </interactant>
    <interactant intactId="EBI-2830566">
        <id>Q9H400</id>
        <label>LIME1</label>
    </interactant>
    <organismsDiffer>false</organismsDiffer>
    <experiments>3</experiments>
</comment>
<comment type="interaction">
    <interactant intactId="EBI-12051377">
        <id>Q8N912</id>
    </interactant>
    <interactant intactId="EBI-11956541">
        <id>Q9GZY8-5</id>
        <label>MFF</label>
    </interactant>
    <organismsDiffer>false</organismsDiffer>
    <experiments>3</experiments>
</comment>
<comment type="interaction">
    <interactant intactId="EBI-12051377">
        <id>Q8N912</id>
    </interactant>
    <interactant intactId="EBI-373355">
        <id>Q5SR56</id>
        <label>MFSD14B</label>
    </interactant>
    <organismsDiffer>false</organismsDiffer>
    <experiments>3</experiments>
</comment>
<comment type="interaction">
    <interactant intactId="EBI-12051377">
        <id>Q8N912</id>
    </interactant>
    <interactant intactId="EBI-724754">
        <id>O14880</id>
        <label>MGST3</label>
    </interactant>
    <organismsDiffer>false</organismsDiffer>
    <experiments>3</experiments>
</comment>
<comment type="interaction">
    <interactant intactId="EBI-12051377">
        <id>Q8N912</id>
    </interactant>
    <interactant intactId="EBI-17263240">
        <id>P15941-11</id>
        <label>MUC1</label>
    </interactant>
    <organismsDiffer>false</organismsDiffer>
    <experiments>3</experiments>
</comment>
<comment type="interaction">
    <interactant intactId="EBI-12051377">
        <id>Q8N912</id>
    </interactant>
    <interactant intactId="EBI-14061804">
        <id>Q68D85</id>
        <label>NCR3LG1</label>
    </interactant>
    <organismsDiffer>false</organismsDiffer>
    <experiments>3</experiments>
</comment>
<comment type="interaction">
    <interactant intactId="EBI-12051377">
        <id>Q8N912</id>
    </interactant>
    <interactant intactId="EBI-716063">
        <id>Q13113</id>
        <label>PDZK1IP1</label>
    </interactant>
    <organismsDiffer>false</organismsDiffer>
    <experiments>3</experiments>
</comment>
<comment type="interaction">
    <interactant intactId="EBI-12051377">
        <id>Q8N912</id>
    </interactant>
    <interactant intactId="EBI-352350">
        <id>P62140</id>
        <label>PPP1CB</label>
    </interactant>
    <organismsDiffer>false</organismsDiffer>
    <experiments>3</experiments>
</comment>
<comment type="interaction">
    <interactant intactId="EBI-12051377">
        <id>Q8N912</id>
    </interactant>
    <interactant intactId="EBI-356283">
        <id>P36873</id>
        <label>PPP1CC</label>
    </interactant>
    <organismsDiffer>false</organismsDiffer>
    <experiments>3</experiments>
</comment>
<comment type="interaction">
    <interactant intactId="EBI-12051377">
        <id>Q8N912</id>
    </interactant>
    <interactant intactId="EBI-7545592">
        <id>Q9H6H4</id>
        <label>REEP4</label>
    </interactant>
    <organismsDiffer>false</organismsDiffer>
    <experiments>3</experiments>
</comment>
<comment type="interaction">
    <interactant intactId="EBI-12051377">
        <id>Q8N912</id>
    </interactant>
    <interactant intactId="EBI-3920694">
        <id>Q9NR31</id>
        <label>SAR1A</label>
    </interactant>
    <organismsDiffer>false</organismsDiffer>
    <experiments>3</experiments>
</comment>
<comment type="interaction">
    <interactant intactId="EBI-12051377">
        <id>Q8N912</id>
    </interactant>
    <interactant intactId="EBI-17295964">
        <id>Q9NQQ7-3</id>
        <label>SLC35C2</label>
    </interactant>
    <organismsDiffer>false</organismsDiffer>
    <experiments>3</experiments>
</comment>
<comment type="interaction">
    <interactant intactId="EBI-12051377">
        <id>Q8N912</id>
    </interactant>
    <interactant intactId="EBI-19027521">
        <id>Q8N6K0</id>
        <label>TEX29</label>
    </interactant>
    <organismsDiffer>false</organismsDiffer>
    <experiments>3</experiments>
</comment>
<comment type="interaction">
    <interactant intactId="EBI-12051377">
        <id>Q8N912</id>
    </interactant>
    <interactant intactId="EBI-6268651">
        <id>Q9NPL8</id>
        <label>TIMMDC1</label>
    </interactant>
    <organismsDiffer>false</organismsDiffer>
    <experiments>3</experiments>
</comment>
<comment type="interaction">
    <interactant intactId="EBI-12051377">
        <id>Q8N912</id>
    </interactant>
    <interactant intactId="EBI-6448756">
        <id>Q96DZ7</id>
        <label>TM4SF19</label>
    </interactant>
    <organismsDiffer>false</organismsDiffer>
    <experiments>3</experiments>
</comment>
<comment type="interaction">
    <interactant intactId="EBI-12051377">
        <id>Q8N912</id>
    </interactant>
    <interactant intactId="EBI-2821497">
        <id>Q9BVX2</id>
        <label>TMEM106C</label>
    </interactant>
    <organismsDiffer>false</organismsDiffer>
    <experiments>3</experiments>
</comment>
<comment type="interaction">
    <interactant intactId="EBI-12051377">
        <id>Q8N912</id>
    </interactant>
    <interactant intactId="EBI-8638294">
        <id>Q9NUH8</id>
        <label>TMEM14B</label>
    </interactant>
    <organismsDiffer>false</organismsDiffer>
    <experiments>3</experiments>
</comment>
<comment type="interaction">
    <interactant intactId="EBI-12051377">
        <id>Q8N912</id>
    </interactant>
    <interactant intactId="EBI-17684533">
        <id>Q9NRX6</id>
        <label>TMEM167B</label>
    </interactant>
    <organismsDiffer>false</organismsDiffer>
    <experiments>3</experiments>
</comment>
<comment type="interaction">
    <interactant intactId="EBI-12051377">
        <id>Q8N912</id>
    </interactant>
    <interactant intactId="EBI-13301303">
        <id>Q6UWW9</id>
        <label>TMEM207</label>
    </interactant>
    <organismsDiffer>false</organismsDiffer>
    <experiments>3</experiments>
</comment>
<comment type="interaction">
    <interactant intactId="EBI-12051377">
        <id>Q8N912</id>
    </interactant>
    <interactant intactId="EBI-726044">
        <id>Q9NW97</id>
        <label>TMEM51</label>
    </interactant>
    <organismsDiffer>false</organismsDiffer>
    <experiments>3</experiments>
</comment>
<comment type="interaction">
    <interactant intactId="EBI-12051377">
        <id>Q8N912</id>
    </interactant>
    <interactant intactId="EBI-11742770">
        <id>Q96HE8</id>
        <label>TMEM80</label>
    </interactant>
    <organismsDiffer>false</organismsDiffer>
    <experiments>3</experiments>
</comment>
<comment type="interaction">
    <interactant intactId="EBI-12051377">
        <id>Q8N912</id>
    </interactant>
    <interactant intactId="EBI-744988">
        <id>Q9H7M9</id>
        <label>VSIR</label>
    </interactant>
    <organismsDiffer>false</organismsDiffer>
    <experiments>3</experiments>
</comment>
<comment type="interaction">
    <interactant intactId="EBI-12051377">
        <id>Q8N912</id>
    </interactant>
    <interactant intactId="EBI-12837904">
        <id>Q96MV8</id>
        <label>ZDHHC15</label>
    </interactant>
    <organismsDiffer>false</organismsDiffer>
    <experiments>3</experiments>
</comment>
<comment type="subcellular location">
    <subcellularLocation>
        <location evidence="1">Cell membrane</location>
        <topology evidence="1">Single-pass membrane protein</topology>
    </subcellularLocation>
</comment>
<reference key="1">
    <citation type="journal article" date="2004" name="Nat. Genet.">
        <title>Complete sequencing and characterization of 21,243 full-length human cDNAs.</title>
        <authorList>
            <person name="Ota T."/>
            <person name="Suzuki Y."/>
            <person name="Nishikawa T."/>
            <person name="Otsuki T."/>
            <person name="Sugiyama T."/>
            <person name="Irie R."/>
            <person name="Wakamatsu A."/>
            <person name="Hayashi K."/>
            <person name="Sato H."/>
            <person name="Nagai K."/>
            <person name="Kimura K."/>
            <person name="Makita H."/>
            <person name="Sekine M."/>
            <person name="Obayashi M."/>
            <person name="Nishi T."/>
            <person name="Shibahara T."/>
            <person name="Tanaka T."/>
            <person name="Ishii S."/>
            <person name="Yamamoto J."/>
            <person name="Saito K."/>
            <person name="Kawai Y."/>
            <person name="Isono Y."/>
            <person name="Nakamura Y."/>
            <person name="Nagahari K."/>
            <person name="Murakami K."/>
            <person name="Yasuda T."/>
            <person name="Iwayanagi T."/>
            <person name="Wagatsuma M."/>
            <person name="Shiratori A."/>
            <person name="Sudo H."/>
            <person name="Hosoiri T."/>
            <person name="Kaku Y."/>
            <person name="Kodaira H."/>
            <person name="Kondo H."/>
            <person name="Sugawara M."/>
            <person name="Takahashi M."/>
            <person name="Kanda K."/>
            <person name="Yokoi T."/>
            <person name="Furuya T."/>
            <person name="Kikkawa E."/>
            <person name="Omura Y."/>
            <person name="Abe K."/>
            <person name="Kamihara K."/>
            <person name="Katsuta N."/>
            <person name="Sato K."/>
            <person name="Tanikawa M."/>
            <person name="Yamazaki M."/>
            <person name="Ninomiya K."/>
            <person name="Ishibashi T."/>
            <person name="Yamashita H."/>
            <person name="Murakawa K."/>
            <person name="Fujimori K."/>
            <person name="Tanai H."/>
            <person name="Kimata M."/>
            <person name="Watanabe M."/>
            <person name="Hiraoka S."/>
            <person name="Chiba Y."/>
            <person name="Ishida S."/>
            <person name="Ono Y."/>
            <person name="Takiguchi S."/>
            <person name="Watanabe S."/>
            <person name="Yosida M."/>
            <person name="Hotuta T."/>
            <person name="Kusano J."/>
            <person name="Kanehori K."/>
            <person name="Takahashi-Fujii A."/>
            <person name="Hara H."/>
            <person name="Tanase T.-O."/>
            <person name="Nomura Y."/>
            <person name="Togiya S."/>
            <person name="Komai F."/>
            <person name="Hara R."/>
            <person name="Takeuchi K."/>
            <person name="Arita M."/>
            <person name="Imose N."/>
            <person name="Musashino K."/>
            <person name="Yuuki H."/>
            <person name="Oshima A."/>
            <person name="Sasaki N."/>
            <person name="Aotsuka S."/>
            <person name="Yoshikawa Y."/>
            <person name="Matsunawa H."/>
            <person name="Ichihara T."/>
            <person name="Shiohata N."/>
            <person name="Sano S."/>
            <person name="Moriya S."/>
            <person name="Momiyama H."/>
            <person name="Satoh N."/>
            <person name="Takami S."/>
            <person name="Terashima Y."/>
            <person name="Suzuki O."/>
            <person name="Nakagawa S."/>
            <person name="Senoh A."/>
            <person name="Mizoguchi H."/>
            <person name="Goto Y."/>
            <person name="Shimizu F."/>
            <person name="Wakebe H."/>
            <person name="Hishigaki H."/>
            <person name="Watanabe T."/>
            <person name="Sugiyama A."/>
            <person name="Takemoto M."/>
            <person name="Kawakami B."/>
            <person name="Yamazaki M."/>
            <person name="Watanabe K."/>
            <person name="Kumagai A."/>
            <person name="Itakura S."/>
            <person name="Fukuzumi Y."/>
            <person name="Fujimori Y."/>
            <person name="Komiyama M."/>
            <person name="Tashiro H."/>
            <person name="Tanigami A."/>
            <person name="Fujiwara T."/>
            <person name="Ono T."/>
            <person name="Yamada K."/>
            <person name="Fujii Y."/>
            <person name="Ozaki K."/>
            <person name="Hirao M."/>
            <person name="Ohmori Y."/>
            <person name="Kawabata A."/>
            <person name="Hikiji T."/>
            <person name="Kobatake N."/>
            <person name="Inagaki H."/>
            <person name="Ikema Y."/>
            <person name="Okamoto S."/>
            <person name="Okitani R."/>
            <person name="Kawakami T."/>
            <person name="Noguchi S."/>
            <person name="Itoh T."/>
            <person name="Shigeta K."/>
            <person name="Senba T."/>
            <person name="Matsumura K."/>
            <person name="Nakajima Y."/>
            <person name="Mizuno T."/>
            <person name="Morinaga M."/>
            <person name="Sasaki M."/>
            <person name="Togashi T."/>
            <person name="Oyama M."/>
            <person name="Hata H."/>
            <person name="Watanabe M."/>
            <person name="Komatsu T."/>
            <person name="Mizushima-Sugano J."/>
            <person name="Satoh T."/>
            <person name="Shirai Y."/>
            <person name="Takahashi Y."/>
            <person name="Nakagawa K."/>
            <person name="Okumura K."/>
            <person name="Nagase T."/>
            <person name="Nomura N."/>
            <person name="Kikuchi H."/>
            <person name="Masuho Y."/>
            <person name="Yamashita R."/>
            <person name="Nakai K."/>
            <person name="Yada T."/>
            <person name="Nakamura Y."/>
            <person name="Ohara O."/>
            <person name="Isogai T."/>
            <person name="Sugano S."/>
        </authorList>
    </citation>
    <scope>NUCLEOTIDE SEQUENCE [LARGE SCALE MRNA]</scope>
    <source>
        <tissue>Heart</tissue>
    </source>
</reference>
<reference key="2">
    <citation type="submission" date="2003-01" db="EMBL/GenBank/DDBJ databases">
        <title>Full-length cDNA libraries and normalization.</title>
        <authorList>
            <person name="Li W.B."/>
            <person name="Gruber C."/>
            <person name="Jessee J."/>
            <person name="Polayes D."/>
        </authorList>
    </citation>
    <scope>NUCLEOTIDE SEQUENCE [LARGE SCALE MRNA]</scope>
    <source>
        <tissue>Placenta</tissue>
    </source>
</reference>
<reference key="3">
    <citation type="submission" date="2005-07" db="EMBL/GenBank/DDBJ databases">
        <authorList>
            <person name="Mural R.J."/>
            <person name="Istrail S."/>
            <person name="Sutton G.G."/>
            <person name="Florea L."/>
            <person name="Halpern A.L."/>
            <person name="Mobarry C.M."/>
            <person name="Lippert R."/>
            <person name="Walenz B."/>
            <person name="Shatkay H."/>
            <person name="Dew I."/>
            <person name="Miller J.R."/>
            <person name="Flanigan M.J."/>
            <person name="Edwards N.J."/>
            <person name="Bolanos R."/>
            <person name="Fasulo D."/>
            <person name="Halldorsson B.V."/>
            <person name="Hannenhalli S."/>
            <person name="Turner R."/>
            <person name="Yooseph S."/>
            <person name="Lu F."/>
            <person name="Nusskern D.R."/>
            <person name="Shue B.C."/>
            <person name="Zheng X.H."/>
            <person name="Zhong F."/>
            <person name="Delcher A.L."/>
            <person name="Huson D.H."/>
            <person name="Kravitz S.A."/>
            <person name="Mouchard L."/>
            <person name="Reinert K."/>
            <person name="Remington K.A."/>
            <person name="Clark A.G."/>
            <person name="Waterman M.S."/>
            <person name="Eichler E.E."/>
            <person name="Adams M.D."/>
            <person name="Hunkapiller M.W."/>
            <person name="Myers E.W."/>
            <person name="Venter J.C."/>
        </authorList>
    </citation>
    <scope>NUCLEOTIDE SEQUENCE [LARGE SCALE GENOMIC DNA]</scope>
</reference>
<reference key="4">
    <citation type="journal article" date="2004" name="Genome Res.">
        <title>The status, quality, and expansion of the NIH full-length cDNA project: the Mammalian Gene Collection (MGC).</title>
        <authorList>
            <consortium name="The MGC Project Team"/>
        </authorList>
    </citation>
    <scope>NUCLEOTIDE SEQUENCE [LARGE SCALE MRNA]</scope>
    <source>
        <tissue>Brain</tissue>
    </source>
</reference>
<keyword id="KW-1003">Cell membrane</keyword>
<keyword id="KW-0472">Membrane</keyword>
<keyword id="KW-1267">Proteomics identification</keyword>
<keyword id="KW-1185">Reference proteome</keyword>
<keyword id="KW-0812">Transmembrane</keyword>
<keyword id="KW-1133">Transmembrane helix</keyword>
<evidence type="ECO:0000250" key="1"/>
<evidence type="ECO:0000255" key="2"/>
<evidence type="ECO:0000256" key="3">
    <source>
        <dbReference type="SAM" id="MobiDB-lite"/>
    </source>
</evidence>